<reference key="1">
    <citation type="journal article" date="2000" name="Nature">
        <title>The genome sequence of the thermoacidophilic scavenger Thermoplasma acidophilum.</title>
        <authorList>
            <person name="Ruepp A."/>
            <person name="Graml W."/>
            <person name="Santos-Martinez M.-L."/>
            <person name="Koretke K.K."/>
            <person name="Volker C."/>
            <person name="Mewes H.-W."/>
            <person name="Frishman D."/>
            <person name="Stocker S."/>
            <person name="Lupas A.N."/>
            <person name="Baumeister W."/>
        </authorList>
    </citation>
    <scope>NUCLEOTIDE SEQUENCE [LARGE SCALE GENOMIC DNA]</scope>
    <source>
        <strain>ATCC 25905 / DSM 1728 / JCM 9062 / NBRC 15155 / AMRC-C165</strain>
    </source>
</reference>
<comment type="function">
    <text evidence="1">Involved in the biosynthesis of the central metabolite phospho-alpha-D-ribosyl-1-pyrophosphate (PRPP) via the transfer of pyrophosphoryl group from ATP to 1-hydroxyl of ribose-5-phosphate (Rib-5-P).</text>
</comment>
<comment type="catalytic activity">
    <reaction evidence="1">
        <text>D-ribose 5-phosphate + ATP = 5-phospho-alpha-D-ribose 1-diphosphate + AMP + H(+)</text>
        <dbReference type="Rhea" id="RHEA:15609"/>
        <dbReference type="ChEBI" id="CHEBI:15378"/>
        <dbReference type="ChEBI" id="CHEBI:30616"/>
        <dbReference type="ChEBI" id="CHEBI:58017"/>
        <dbReference type="ChEBI" id="CHEBI:78346"/>
        <dbReference type="ChEBI" id="CHEBI:456215"/>
        <dbReference type="EC" id="2.7.6.1"/>
    </reaction>
</comment>
<comment type="cofactor">
    <cofactor evidence="1">
        <name>Mg(2+)</name>
        <dbReference type="ChEBI" id="CHEBI:18420"/>
    </cofactor>
    <text evidence="1">Binds 2 Mg(2+) ions per subunit.</text>
</comment>
<comment type="pathway">
    <text evidence="1">Metabolic intermediate biosynthesis; 5-phospho-alpha-D-ribose 1-diphosphate biosynthesis; 5-phospho-alpha-D-ribose 1-diphosphate from D-ribose 5-phosphate (route I): step 1/1.</text>
</comment>
<comment type="subcellular location">
    <subcellularLocation>
        <location evidence="1">Cytoplasm</location>
    </subcellularLocation>
</comment>
<comment type="similarity">
    <text evidence="1">Belongs to the ribose-phosphate pyrophosphokinase family. Class III (archaeal) subfamily.</text>
</comment>
<comment type="sequence caution" evidence="2">
    <conflict type="erroneous initiation">
        <sequence resource="EMBL-CDS" id="CAC11266"/>
    </conflict>
    <text>Truncated N-terminus.</text>
</comment>
<organism>
    <name type="scientific">Thermoplasma acidophilum (strain ATCC 25905 / DSM 1728 / JCM 9062 / NBRC 15155 / AMRC-C165)</name>
    <dbReference type="NCBI Taxonomy" id="273075"/>
    <lineage>
        <taxon>Archaea</taxon>
        <taxon>Methanobacteriati</taxon>
        <taxon>Thermoplasmatota</taxon>
        <taxon>Thermoplasmata</taxon>
        <taxon>Thermoplasmatales</taxon>
        <taxon>Thermoplasmataceae</taxon>
        <taxon>Thermoplasma</taxon>
    </lineage>
</organism>
<dbReference type="EC" id="2.7.6.1" evidence="1"/>
<dbReference type="EMBL" id="AL445063">
    <property type="protein sequence ID" value="CAC11266.1"/>
    <property type="status" value="ALT_INIT"/>
    <property type="molecule type" value="Genomic_DNA"/>
</dbReference>
<dbReference type="RefSeq" id="WP_010900546.1">
    <property type="nucleotide sequence ID" value="NC_002578.1"/>
</dbReference>
<dbReference type="SMR" id="Q9HLV6"/>
<dbReference type="FunCoup" id="Q9HLV6">
    <property type="interactions" value="186"/>
</dbReference>
<dbReference type="STRING" id="273075.gene:9571333"/>
<dbReference type="PaxDb" id="273075-Ta0119m"/>
<dbReference type="EnsemblBacteria" id="CAC11266">
    <property type="protein sequence ID" value="CAC11266"/>
    <property type="gene ID" value="CAC11266"/>
</dbReference>
<dbReference type="KEGG" id="tac:Ta0119"/>
<dbReference type="eggNOG" id="arCOG00067">
    <property type="taxonomic scope" value="Archaea"/>
</dbReference>
<dbReference type="HOGENOM" id="CLU_033546_2_2_2"/>
<dbReference type="InParanoid" id="Q9HLV6"/>
<dbReference type="OrthoDB" id="371997at2157"/>
<dbReference type="UniPathway" id="UPA00087">
    <property type="reaction ID" value="UER00172"/>
</dbReference>
<dbReference type="Proteomes" id="UP000001024">
    <property type="component" value="Chromosome"/>
</dbReference>
<dbReference type="GO" id="GO:0005737">
    <property type="term" value="C:cytoplasm"/>
    <property type="evidence" value="ECO:0007669"/>
    <property type="project" value="UniProtKB-SubCell"/>
</dbReference>
<dbReference type="GO" id="GO:0002189">
    <property type="term" value="C:ribose phosphate diphosphokinase complex"/>
    <property type="evidence" value="ECO:0007669"/>
    <property type="project" value="TreeGrafter"/>
</dbReference>
<dbReference type="GO" id="GO:0005524">
    <property type="term" value="F:ATP binding"/>
    <property type="evidence" value="ECO:0007669"/>
    <property type="project" value="UniProtKB-KW"/>
</dbReference>
<dbReference type="GO" id="GO:0016301">
    <property type="term" value="F:kinase activity"/>
    <property type="evidence" value="ECO:0007669"/>
    <property type="project" value="UniProtKB-KW"/>
</dbReference>
<dbReference type="GO" id="GO:0000287">
    <property type="term" value="F:magnesium ion binding"/>
    <property type="evidence" value="ECO:0007669"/>
    <property type="project" value="UniProtKB-UniRule"/>
</dbReference>
<dbReference type="GO" id="GO:0004749">
    <property type="term" value="F:ribose phosphate diphosphokinase activity"/>
    <property type="evidence" value="ECO:0007669"/>
    <property type="project" value="UniProtKB-UniRule"/>
</dbReference>
<dbReference type="GO" id="GO:0006015">
    <property type="term" value="P:5-phosphoribose 1-diphosphate biosynthetic process"/>
    <property type="evidence" value="ECO:0007669"/>
    <property type="project" value="UniProtKB-UniRule"/>
</dbReference>
<dbReference type="GO" id="GO:0006164">
    <property type="term" value="P:purine nucleotide biosynthetic process"/>
    <property type="evidence" value="ECO:0007669"/>
    <property type="project" value="TreeGrafter"/>
</dbReference>
<dbReference type="CDD" id="cd06223">
    <property type="entry name" value="PRTases_typeI"/>
    <property type="match status" value="1"/>
</dbReference>
<dbReference type="FunFam" id="3.40.50.2020:FF:000014">
    <property type="entry name" value="Ribose-phosphate pyrophosphokinase 1"/>
    <property type="match status" value="1"/>
</dbReference>
<dbReference type="Gene3D" id="3.40.50.2020">
    <property type="match status" value="2"/>
</dbReference>
<dbReference type="HAMAP" id="MF_00583_A">
    <property type="entry name" value="RibP_PPkinase_A"/>
    <property type="match status" value="1"/>
</dbReference>
<dbReference type="InterPro" id="IPR029099">
    <property type="entry name" value="Pribosyltran_N"/>
</dbReference>
<dbReference type="InterPro" id="IPR000836">
    <property type="entry name" value="PRibTrfase_dom"/>
</dbReference>
<dbReference type="InterPro" id="IPR029057">
    <property type="entry name" value="PRTase-like"/>
</dbReference>
<dbReference type="InterPro" id="IPR005946">
    <property type="entry name" value="Rib-P_diPkinase"/>
</dbReference>
<dbReference type="InterPro" id="IPR037514">
    <property type="entry name" value="Rib-P_diPkinase_arc"/>
</dbReference>
<dbReference type="NCBIfam" id="NF002095">
    <property type="entry name" value="PRK00934.1"/>
    <property type="match status" value="1"/>
</dbReference>
<dbReference type="NCBIfam" id="TIGR01251">
    <property type="entry name" value="ribP_PPkin"/>
    <property type="match status" value="1"/>
</dbReference>
<dbReference type="PANTHER" id="PTHR10210">
    <property type="entry name" value="RIBOSE-PHOSPHATE DIPHOSPHOKINASE FAMILY MEMBER"/>
    <property type="match status" value="1"/>
</dbReference>
<dbReference type="PANTHER" id="PTHR10210:SF32">
    <property type="entry name" value="RIBOSE-PHOSPHATE PYROPHOSPHOKINASE 2"/>
    <property type="match status" value="1"/>
</dbReference>
<dbReference type="Pfam" id="PF00156">
    <property type="entry name" value="Pribosyltran"/>
    <property type="match status" value="1"/>
</dbReference>
<dbReference type="Pfam" id="PF13793">
    <property type="entry name" value="Pribosyltran_N"/>
    <property type="match status" value="1"/>
</dbReference>
<dbReference type="SMART" id="SM01400">
    <property type="entry name" value="Pribosyltran_N"/>
    <property type="match status" value="1"/>
</dbReference>
<dbReference type="SUPFAM" id="SSF53271">
    <property type="entry name" value="PRTase-like"/>
    <property type="match status" value="1"/>
</dbReference>
<proteinExistence type="inferred from homology"/>
<name>KPRS_THEAC</name>
<keyword id="KW-0067">ATP-binding</keyword>
<keyword id="KW-0963">Cytoplasm</keyword>
<keyword id="KW-0418">Kinase</keyword>
<keyword id="KW-0460">Magnesium</keyword>
<keyword id="KW-0479">Metal-binding</keyword>
<keyword id="KW-0545">Nucleotide biosynthesis</keyword>
<keyword id="KW-0547">Nucleotide-binding</keyword>
<keyword id="KW-1185">Reference proteome</keyword>
<keyword id="KW-0808">Transferase</keyword>
<gene>
    <name evidence="1" type="primary">prs</name>
    <name type="ordered locus">Ta0119</name>
</gene>
<evidence type="ECO:0000255" key="1">
    <source>
        <dbReference type="HAMAP-Rule" id="MF_00583"/>
    </source>
</evidence>
<evidence type="ECO:0000305" key="2"/>
<protein>
    <recommendedName>
        <fullName evidence="1">Ribose-phosphate pyrophosphokinase</fullName>
        <shortName evidence="1">RPPK</shortName>
        <ecNumber evidence="1">2.7.6.1</ecNumber>
    </recommendedName>
    <alternativeName>
        <fullName evidence="1">5-phospho-D-ribosyl alpha-1-diphosphate synthase</fullName>
    </alternativeName>
    <alternativeName>
        <fullName evidence="1">Phosphoribosyl diphosphate synthase</fullName>
    </alternativeName>
    <alternativeName>
        <fullName evidence="1">Phosphoribosyl pyrophosphate synthase</fullName>
        <shortName evidence="1">P-Rib-PP synthase</shortName>
        <shortName evidence="1">PRPP synthase</shortName>
        <shortName evidence="1">PRPPase</shortName>
    </alternativeName>
</protein>
<feature type="chain" id="PRO_0000141250" description="Ribose-phosphate pyrophosphokinase">
    <location>
        <begin position="1"/>
        <end position="286"/>
    </location>
</feature>
<feature type="active site" evidence="1">
    <location>
        <position position="184"/>
    </location>
</feature>
<feature type="binding site" evidence="1">
    <location>
        <begin position="34"/>
        <end position="36"/>
    </location>
    <ligand>
        <name>ATP</name>
        <dbReference type="ChEBI" id="CHEBI:30616"/>
    </ligand>
</feature>
<feature type="binding site" evidence="1">
    <location>
        <begin position="91"/>
        <end position="92"/>
    </location>
    <ligand>
        <name>ATP</name>
        <dbReference type="ChEBI" id="CHEBI:30616"/>
    </ligand>
</feature>
<feature type="binding site" evidence="1">
    <location>
        <position position="124"/>
    </location>
    <ligand>
        <name>Mg(2+)</name>
        <dbReference type="ChEBI" id="CHEBI:18420"/>
        <label>1</label>
    </ligand>
</feature>
<feature type="binding site" evidence="1">
    <location>
        <position position="161"/>
    </location>
    <ligand>
        <name>Mg(2+)</name>
        <dbReference type="ChEBI" id="CHEBI:18420"/>
        <label>2</label>
    </ligand>
</feature>
<feature type="binding site" evidence="1">
    <location>
        <position position="186"/>
    </location>
    <ligand>
        <name>D-ribose 5-phosphate</name>
        <dbReference type="ChEBI" id="CHEBI:78346"/>
    </ligand>
</feature>
<feature type="binding site" evidence="1">
    <location>
        <position position="210"/>
    </location>
    <ligand>
        <name>D-ribose 5-phosphate</name>
        <dbReference type="ChEBI" id="CHEBI:78346"/>
    </ligand>
</feature>
<feature type="binding site" evidence="1">
    <location>
        <begin position="214"/>
        <end position="218"/>
    </location>
    <ligand>
        <name>D-ribose 5-phosphate</name>
        <dbReference type="ChEBI" id="CHEBI:78346"/>
    </ligand>
</feature>
<sequence>MKIIGLQSSSSLARKVAEQLHSELVLPEERRFPDGELYVRYDADLNGEDVFIIGNTHTDAEIIEMILSLSAVRDYQVKSVNIIAPYYGYARQHQRYRRGEPISSQIFTEIFASYSTSIATVDIHDEQTLSYSKVRFTDLHADRSIIDFYRHVDIDYVVSPDDGGLQRVKHVAEALGKKYFYIEKKRIDDRTVEMKAPDIDLNGKKVLILDDIISTGGTIAKSSSILRQKGASKIYVSAIHGLFVNSSESKILENADEIHVTDTVAGKFSDISVYQVVCDYIAGKHA</sequence>
<accession>Q9HLV6</accession>